<accession>O74823</accession>
<protein>
    <recommendedName>
        <fullName>Zinc finger CCCH domain-containing protein C337.12</fullName>
    </recommendedName>
</protein>
<organism>
    <name type="scientific">Schizosaccharomyces pombe (strain 972 / ATCC 24843)</name>
    <name type="common">Fission yeast</name>
    <dbReference type="NCBI Taxonomy" id="284812"/>
    <lineage>
        <taxon>Eukaryota</taxon>
        <taxon>Fungi</taxon>
        <taxon>Dikarya</taxon>
        <taxon>Ascomycota</taxon>
        <taxon>Taphrinomycotina</taxon>
        <taxon>Schizosaccharomycetes</taxon>
        <taxon>Schizosaccharomycetales</taxon>
        <taxon>Schizosaccharomycetaceae</taxon>
        <taxon>Schizosaccharomyces</taxon>
    </lineage>
</organism>
<feature type="chain" id="PRO_0000314103" description="Zinc finger CCCH domain-containing protein C337.12">
    <location>
        <begin position="1"/>
        <end position="376"/>
    </location>
</feature>
<feature type="zinc finger region" description="C3H1-type 1" evidence="2">
    <location>
        <begin position="202"/>
        <end position="228"/>
    </location>
</feature>
<feature type="zinc finger region" description="C3H1-type 2" evidence="2">
    <location>
        <begin position="229"/>
        <end position="256"/>
    </location>
</feature>
<feature type="zinc finger region" description="C3H1-type 3" evidence="2">
    <location>
        <begin position="257"/>
        <end position="283"/>
    </location>
</feature>
<feature type="zinc finger region" description="C3H1-type 4" evidence="2">
    <location>
        <begin position="284"/>
        <end position="312"/>
    </location>
</feature>
<feature type="region of interest" description="Disordered" evidence="3">
    <location>
        <begin position="60"/>
        <end position="95"/>
    </location>
</feature>
<feature type="region of interest" description="Disordered" evidence="3">
    <location>
        <begin position="347"/>
        <end position="376"/>
    </location>
</feature>
<feature type="coiled-coil region" evidence="1">
    <location>
        <begin position="2"/>
        <end position="25"/>
    </location>
</feature>
<feature type="coiled-coil region" evidence="1">
    <location>
        <begin position="105"/>
        <end position="140"/>
    </location>
</feature>
<feature type="compositionally biased region" description="Basic and acidic residues" evidence="3">
    <location>
        <begin position="80"/>
        <end position="89"/>
    </location>
</feature>
<feature type="compositionally biased region" description="Polar residues" evidence="3">
    <location>
        <begin position="349"/>
        <end position="369"/>
    </location>
</feature>
<gene>
    <name type="ORF">SPBC337.12</name>
</gene>
<dbReference type="EMBL" id="CU329671">
    <property type="protein sequence ID" value="CAA21282.3"/>
    <property type="molecule type" value="Genomic_DNA"/>
</dbReference>
<dbReference type="PIR" id="T40265">
    <property type="entry name" value="T40265"/>
</dbReference>
<dbReference type="BioGRID" id="276822">
    <property type="interactions" value="182"/>
</dbReference>
<dbReference type="STRING" id="284812.O74823"/>
<dbReference type="iPTMnet" id="O74823"/>
<dbReference type="PaxDb" id="4896-SPBC337.12.1"/>
<dbReference type="EnsemblFungi" id="SPBC337.12.1">
    <property type="protein sequence ID" value="SPBC337.12.1:pep"/>
    <property type="gene ID" value="SPBC337.12"/>
</dbReference>
<dbReference type="KEGG" id="spo:2540291"/>
<dbReference type="PomBase" id="SPBC337.12"/>
<dbReference type="VEuPathDB" id="FungiDB:SPBC337.12"/>
<dbReference type="eggNOG" id="KOG1492">
    <property type="taxonomic scope" value="Eukaryota"/>
</dbReference>
<dbReference type="HOGENOM" id="CLU_048898_0_0_1"/>
<dbReference type="InParanoid" id="O74823"/>
<dbReference type="OMA" id="CKRFTST"/>
<dbReference type="PRO" id="PR:O74823"/>
<dbReference type="Proteomes" id="UP000002485">
    <property type="component" value="Chromosome II"/>
</dbReference>
<dbReference type="GO" id="GO:0000785">
    <property type="term" value="C:chromatin"/>
    <property type="evidence" value="ECO:0000314"/>
    <property type="project" value="PomBase"/>
</dbReference>
<dbReference type="GO" id="GO:1990477">
    <property type="term" value="C:MTREC complex"/>
    <property type="evidence" value="ECO:0000314"/>
    <property type="project" value="PomBase"/>
</dbReference>
<dbReference type="GO" id="GO:0016604">
    <property type="term" value="C:nuclear body"/>
    <property type="evidence" value="ECO:0000314"/>
    <property type="project" value="PomBase"/>
</dbReference>
<dbReference type="GO" id="GO:0005634">
    <property type="term" value="C:nucleus"/>
    <property type="evidence" value="ECO:0000314"/>
    <property type="project" value="PomBase"/>
</dbReference>
<dbReference type="GO" id="GO:0008270">
    <property type="term" value="F:zinc ion binding"/>
    <property type="evidence" value="ECO:0007669"/>
    <property type="project" value="UniProtKB-KW"/>
</dbReference>
<dbReference type="GO" id="GO:0033621">
    <property type="term" value="P:nuclear mRNA surveillance of meiosis-specific transcripts"/>
    <property type="evidence" value="ECO:0000315"/>
    <property type="project" value="PomBase"/>
</dbReference>
<dbReference type="GO" id="GO:0071030">
    <property type="term" value="P:nuclear mRNA surveillance of spliceosomal pre-mRNA splicing"/>
    <property type="evidence" value="ECO:0000269"/>
    <property type="project" value="PomBase"/>
</dbReference>
<dbReference type="FunFam" id="4.10.1000.10:FF:000035">
    <property type="entry name" value="CCCH zinc finger protein, variant"/>
    <property type="match status" value="1"/>
</dbReference>
<dbReference type="Gene3D" id="4.10.1000.10">
    <property type="entry name" value="Zinc finger, CCCH-type"/>
    <property type="match status" value="2"/>
</dbReference>
<dbReference type="InterPro" id="IPR000571">
    <property type="entry name" value="Znf_CCCH"/>
</dbReference>
<dbReference type="InterPro" id="IPR036855">
    <property type="entry name" value="Znf_CCCH_sf"/>
</dbReference>
<dbReference type="PANTHER" id="PTHR46156">
    <property type="entry name" value="CCCH ZINGC FINGER"/>
    <property type="match status" value="1"/>
</dbReference>
<dbReference type="PANTHER" id="PTHR46156:SF1">
    <property type="entry name" value="ZINC FINGER CCCH DOMAIN-CONTAINING PROTEIN 3"/>
    <property type="match status" value="1"/>
</dbReference>
<dbReference type="Pfam" id="PF00642">
    <property type="entry name" value="zf-CCCH"/>
    <property type="match status" value="1"/>
</dbReference>
<dbReference type="SMART" id="SM00356">
    <property type="entry name" value="ZnF_C3H1"/>
    <property type="match status" value="4"/>
</dbReference>
<dbReference type="SUPFAM" id="SSF90229">
    <property type="entry name" value="CCCH zinc finger"/>
    <property type="match status" value="1"/>
</dbReference>
<dbReference type="PROSITE" id="PS50103">
    <property type="entry name" value="ZF_C3H1"/>
    <property type="match status" value="4"/>
</dbReference>
<comment type="subcellular location">
    <subcellularLocation>
        <location evidence="4">Nucleus</location>
    </subcellularLocation>
</comment>
<keyword id="KW-0175">Coiled coil</keyword>
<keyword id="KW-0479">Metal-binding</keyword>
<keyword id="KW-0539">Nucleus</keyword>
<keyword id="KW-1185">Reference proteome</keyword>
<keyword id="KW-0677">Repeat</keyword>
<keyword id="KW-0862">Zinc</keyword>
<keyword id="KW-0863">Zinc-finger</keyword>
<proteinExistence type="predicted"/>
<reference key="1">
    <citation type="journal article" date="2002" name="Nature">
        <title>The genome sequence of Schizosaccharomyces pombe.</title>
        <authorList>
            <person name="Wood V."/>
            <person name="Gwilliam R."/>
            <person name="Rajandream M.A."/>
            <person name="Lyne M.H."/>
            <person name="Lyne R."/>
            <person name="Stewart A."/>
            <person name="Sgouros J.G."/>
            <person name="Peat N."/>
            <person name="Hayles J."/>
            <person name="Baker S.G."/>
            <person name="Basham D."/>
            <person name="Bowman S."/>
            <person name="Brooks K."/>
            <person name="Brown D."/>
            <person name="Brown S."/>
            <person name="Chillingworth T."/>
            <person name="Churcher C.M."/>
            <person name="Collins M."/>
            <person name="Connor R."/>
            <person name="Cronin A."/>
            <person name="Davis P."/>
            <person name="Feltwell T."/>
            <person name="Fraser A."/>
            <person name="Gentles S."/>
            <person name="Goble A."/>
            <person name="Hamlin N."/>
            <person name="Harris D.E."/>
            <person name="Hidalgo J."/>
            <person name="Hodgson G."/>
            <person name="Holroyd S."/>
            <person name="Hornsby T."/>
            <person name="Howarth S."/>
            <person name="Huckle E.J."/>
            <person name="Hunt S."/>
            <person name="Jagels K."/>
            <person name="James K.D."/>
            <person name="Jones L."/>
            <person name="Jones M."/>
            <person name="Leather S."/>
            <person name="McDonald S."/>
            <person name="McLean J."/>
            <person name="Mooney P."/>
            <person name="Moule S."/>
            <person name="Mungall K.L."/>
            <person name="Murphy L.D."/>
            <person name="Niblett D."/>
            <person name="Odell C."/>
            <person name="Oliver K."/>
            <person name="O'Neil S."/>
            <person name="Pearson D."/>
            <person name="Quail M.A."/>
            <person name="Rabbinowitsch E."/>
            <person name="Rutherford K.M."/>
            <person name="Rutter S."/>
            <person name="Saunders D."/>
            <person name="Seeger K."/>
            <person name="Sharp S."/>
            <person name="Skelton J."/>
            <person name="Simmonds M.N."/>
            <person name="Squares R."/>
            <person name="Squares S."/>
            <person name="Stevens K."/>
            <person name="Taylor K."/>
            <person name="Taylor R.G."/>
            <person name="Tivey A."/>
            <person name="Walsh S.V."/>
            <person name="Warren T."/>
            <person name="Whitehead S."/>
            <person name="Woodward J.R."/>
            <person name="Volckaert G."/>
            <person name="Aert R."/>
            <person name="Robben J."/>
            <person name="Grymonprez B."/>
            <person name="Weltjens I."/>
            <person name="Vanstreels E."/>
            <person name="Rieger M."/>
            <person name="Schaefer M."/>
            <person name="Mueller-Auer S."/>
            <person name="Gabel C."/>
            <person name="Fuchs M."/>
            <person name="Duesterhoeft A."/>
            <person name="Fritzc C."/>
            <person name="Holzer E."/>
            <person name="Moestl D."/>
            <person name="Hilbert H."/>
            <person name="Borzym K."/>
            <person name="Langer I."/>
            <person name="Beck A."/>
            <person name="Lehrach H."/>
            <person name="Reinhardt R."/>
            <person name="Pohl T.M."/>
            <person name="Eger P."/>
            <person name="Zimmermann W."/>
            <person name="Wedler H."/>
            <person name="Wambutt R."/>
            <person name="Purnelle B."/>
            <person name="Goffeau A."/>
            <person name="Cadieu E."/>
            <person name="Dreano S."/>
            <person name="Gloux S."/>
            <person name="Lelaure V."/>
            <person name="Mottier S."/>
            <person name="Galibert F."/>
            <person name="Aves S.J."/>
            <person name="Xiang Z."/>
            <person name="Hunt C."/>
            <person name="Moore K."/>
            <person name="Hurst S.M."/>
            <person name="Lucas M."/>
            <person name="Rochet M."/>
            <person name="Gaillardin C."/>
            <person name="Tallada V.A."/>
            <person name="Garzon A."/>
            <person name="Thode G."/>
            <person name="Daga R.R."/>
            <person name="Cruzado L."/>
            <person name="Jimenez J."/>
            <person name="Sanchez M."/>
            <person name="del Rey F."/>
            <person name="Benito J."/>
            <person name="Dominguez A."/>
            <person name="Revuelta J.L."/>
            <person name="Moreno S."/>
            <person name="Armstrong J."/>
            <person name="Forsburg S.L."/>
            <person name="Cerutti L."/>
            <person name="Lowe T."/>
            <person name="McCombie W.R."/>
            <person name="Paulsen I."/>
            <person name="Potashkin J."/>
            <person name="Shpakovski G.V."/>
            <person name="Ussery D."/>
            <person name="Barrell B.G."/>
            <person name="Nurse P."/>
        </authorList>
    </citation>
    <scope>NUCLEOTIDE SEQUENCE [LARGE SCALE GENOMIC DNA]</scope>
    <source>
        <strain>972 / ATCC 24843</strain>
    </source>
</reference>
<reference key="2">
    <citation type="journal article" date="2011" name="Science">
        <title>Comparative functional genomics of the fission yeasts.</title>
        <authorList>
            <person name="Rhind N."/>
            <person name="Chen Z."/>
            <person name="Yassour M."/>
            <person name="Thompson D.A."/>
            <person name="Haas B.J."/>
            <person name="Habib N."/>
            <person name="Wapinski I."/>
            <person name="Roy S."/>
            <person name="Lin M.F."/>
            <person name="Heiman D.I."/>
            <person name="Young S.K."/>
            <person name="Furuya K."/>
            <person name="Guo Y."/>
            <person name="Pidoux A."/>
            <person name="Chen H.M."/>
            <person name="Robbertse B."/>
            <person name="Goldberg J.M."/>
            <person name="Aoki K."/>
            <person name="Bayne E.H."/>
            <person name="Berlin A.M."/>
            <person name="Desjardins C.A."/>
            <person name="Dobbs E."/>
            <person name="Dukaj L."/>
            <person name="Fan L."/>
            <person name="FitzGerald M.G."/>
            <person name="French C."/>
            <person name="Gujja S."/>
            <person name="Hansen K."/>
            <person name="Keifenheim D."/>
            <person name="Levin J.Z."/>
            <person name="Mosher R.A."/>
            <person name="Mueller C.A."/>
            <person name="Pfiffner J."/>
            <person name="Priest M."/>
            <person name="Russ C."/>
            <person name="Smialowska A."/>
            <person name="Swoboda P."/>
            <person name="Sykes S.M."/>
            <person name="Vaughn M."/>
            <person name="Vengrova S."/>
            <person name="Yoder R."/>
            <person name="Zeng Q."/>
            <person name="Allshire R."/>
            <person name="Baulcombe D."/>
            <person name="Birren B.W."/>
            <person name="Brown W."/>
            <person name="Ekwall K."/>
            <person name="Kellis M."/>
            <person name="Leatherwood J."/>
            <person name="Levin H."/>
            <person name="Margalit H."/>
            <person name="Martienssen R."/>
            <person name="Nieduszynski C.A."/>
            <person name="Spatafora J.W."/>
            <person name="Friedman N."/>
            <person name="Dalgaard J.Z."/>
            <person name="Baumann P."/>
            <person name="Niki H."/>
            <person name="Regev A."/>
            <person name="Nusbaum C."/>
        </authorList>
    </citation>
    <scope>REVISION OF GENE MODEL</scope>
</reference>
<reference key="3">
    <citation type="journal article" date="2006" name="Nat. Biotechnol.">
        <title>ORFeome cloning and global analysis of protein localization in the fission yeast Schizosaccharomyces pombe.</title>
        <authorList>
            <person name="Matsuyama A."/>
            <person name="Arai R."/>
            <person name="Yashiroda Y."/>
            <person name="Shirai A."/>
            <person name="Kamata A."/>
            <person name="Sekido S."/>
            <person name="Kobayashi Y."/>
            <person name="Hashimoto A."/>
            <person name="Hamamoto M."/>
            <person name="Hiraoka Y."/>
            <person name="Horinouchi S."/>
            <person name="Yoshida M."/>
        </authorList>
    </citation>
    <scope>SUBCELLULAR LOCATION [LARGE SCALE ANALYSIS]</scope>
</reference>
<sequence>MNEQQLLENIASLAGAINQYKNEKEPTQVLDAAKANKNTRSYPYSVSRNYSFILNKSNRSKSTAASPPYVIPSTSSNADDANKEPEKQSTSDYVSRKNRHMQLIKKNILEHDLQARKANLESYRAKLEKEYKTLAENKIQQRLSDGTKQLVTIDGLQYITGVSDTKWLEFVSAKGQCPKYLYWNNKSYLLKKKRFLKEVGNSPSAVYCRYYNANGICGKGAACRFVHEPTRKTICPKFLNGRCNKAEDCNLSHELDPRRIPACRYFLLGKCNNPNCRYVHIHYSENAPICFEFAKYGFCELGTSCKNQHILQCTDYAMFGSCNNPQCSLYHGAVSADVPEQTEAPISKTAGSINPEDSGSEIGSNSLESNLDFISV</sequence>
<evidence type="ECO:0000255" key="1"/>
<evidence type="ECO:0000255" key="2">
    <source>
        <dbReference type="PROSITE-ProRule" id="PRU00723"/>
    </source>
</evidence>
<evidence type="ECO:0000256" key="3">
    <source>
        <dbReference type="SAM" id="MobiDB-lite"/>
    </source>
</evidence>
<evidence type="ECO:0000269" key="4">
    <source>
    </source>
</evidence>
<name>YBJC_SCHPO</name>